<gene>
    <name type="primary">ssp-32</name>
    <name type="ORF">F32B6.7</name>
</gene>
<proteinExistence type="evidence at transcript level"/>
<comment type="tissue specificity">
    <text evidence="3">Expressed at higher level in testis.</text>
</comment>
<keyword id="KW-1185">Reference proteome</keyword>
<protein>
    <recommendedName>
        <fullName>Sperm-specific class P protein 32</fullName>
    </recommendedName>
</protein>
<dbReference type="EMBL" id="Z81074">
    <property type="protein sequence ID" value="CAB03041.1"/>
    <property type="molecule type" value="Genomic_DNA"/>
</dbReference>
<dbReference type="PIR" id="T21642">
    <property type="entry name" value="T21642"/>
</dbReference>
<dbReference type="RefSeq" id="NP_501782.1">
    <property type="nucleotide sequence ID" value="NM_069381.5"/>
</dbReference>
<dbReference type="SMR" id="O45433"/>
<dbReference type="FunCoup" id="O45433">
    <property type="interactions" value="7"/>
</dbReference>
<dbReference type="STRING" id="6239.F32B6.7.1"/>
<dbReference type="PaxDb" id="6239-F32B6.7"/>
<dbReference type="PeptideAtlas" id="O45433"/>
<dbReference type="EnsemblMetazoa" id="F32B6.7.1">
    <property type="protein sequence ID" value="F32B6.7.1"/>
    <property type="gene ID" value="WBGene00006049"/>
</dbReference>
<dbReference type="GeneID" id="191963"/>
<dbReference type="KEGG" id="cel:CELE_F32B6.7"/>
<dbReference type="UCSC" id="F32B6.7">
    <property type="organism name" value="c. elegans"/>
</dbReference>
<dbReference type="AGR" id="WB:WBGene00006049"/>
<dbReference type="CTD" id="191963"/>
<dbReference type="WormBase" id="F32B6.7">
    <property type="protein sequence ID" value="CE09862"/>
    <property type="gene ID" value="WBGene00006049"/>
    <property type="gene designation" value="ssp-32"/>
</dbReference>
<dbReference type="eggNOG" id="ENOG502S66Y">
    <property type="taxonomic scope" value="Eukaryota"/>
</dbReference>
<dbReference type="GeneTree" id="ENSGT00970000196305"/>
<dbReference type="HOGENOM" id="CLU_147608_0_1_1"/>
<dbReference type="InParanoid" id="O45433"/>
<dbReference type="OMA" id="CIVEPTM"/>
<dbReference type="OrthoDB" id="264603at2759"/>
<dbReference type="PhylomeDB" id="O45433"/>
<dbReference type="PRO" id="PR:O45433"/>
<dbReference type="Proteomes" id="UP000001940">
    <property type="component" value="Chromosome IV"/>
</dbReference>
<dbReference type="Bgee" id="WBGene00006049">
    <property type="expression patterns" value="Expressed in adult organism and 2 other cell types or tissues"/>
</dbReference>
<dbReference type="Gene3D" id="2.60.40.10">
    <property type="entry name" value="Immunoglobulins"/>
    <property type="match status" value="1"/>
</dbReference>
<dbReference type="InterPro" id="IPR013783">
    <property type="entry name" value="Ig-like_fold"/>
</dbReference>
<dbReference type="InterPro" id="IPR000535">
    <property type="entry name" value="MSP_dom"/>
</dbReference>
<dbReference type="InterPro" id="IPR008962">
    <property type="entry name" value="PapD-like_sf"/>
</dbReference>
<dbReference type="InterPro" id="IPR051774">
    <property type="entry name" value="Sperm-specific_class_P"/>
</dbReference>
<dbReference type="PANTHER" id="PTHR22947">
    <property type="entry name" value="MAJOR SPERM PROTEIN"/>
    <property type="match status" value="1"/>
</dbReference>
<dbReference type="PANTHER" id="PTHR22947:SF34">
    <property type="entry name" value="MSP DOMAIN-CONTAINING PROTEIN-RELATED"/>
    <property type="match status" value="1"/>
</dbReference>
<dbReference type="Pfam" id="PF00635">
    <property type="entry name" value="Motile_Sperm"/>
    <property type="match status" value="1"/>
</dbReference>
<dbReference type="SUPFAM" id="SSF49354">
    <property type="entry name" value="PapD-like"/>
    <property type="match status" value="1"/>
</dbReference>
<dbReference type="PROSITE" id="PS50202">
    <property type="entry name" value="MSP"/>
    <property type="match status" value="1"/>
</dbReference>
<feature type="chain" id="PRO_0000213452" description="Sperm-specific class P protein 32">
    <location>
        <begin position="1"/>
        <end position="107"/>
    </location>
</feature>
<feature type="domain" description="MSP" evidence="1">
    <location>
        <begin position="1"/>
        <end position="107"/>
    </location>
</feature>
<feature type="region of interest" description="Disordered" evidence="2">
    <location>
        <begin position="1"/>
        <end position="20"/>
    </location>
</feature>
<name>SSP32_CAEEL</name>
<organism>
    <name type="scientific">Caenorhabditis elegans</name>
    <dbReference type="NCBI Taxonomy" id="6239"/>
    <lineage>
        <taxon>Eukaryota</taxon>
        <taxon>Metazoa</taxon>
        <taxon>Ecdysozoa</taxon>
        <taxon>Nematoda</taxon>
        <taxon>Chromadorea</taxon>
        <taxon>Rhabditida</taxon>
        <taxon>Rhabditina</taxon>
        <taxon>Rhabditomorpha</taxon>
        <taxon>Rhabditoidea</taxon>
        <taxon>Rhabditidae</taxon>
        <taxon>Peloderinae</taxon>
        <taxon>Caenorhabditis</taxon>
    </lineage>
</organism>
<accession>O45433</accession>
<reference key="1">
    <citation type="journal article" date="1998" name="Science">
        <title>Genome sequence of the nematode C. elegans: a platform for investigating biology.</title>
        <authorList>
            <consortium name="The C. elegans sequencing consortium"/>
        </authorList>
    </citation>
    <scope>NUCLEOTIDE SEQUENCE [LARGE SCALE GENOMIC DNA]</scope>
    <source>
        <strain>Bristol N2</strain>
    </source>
</reference>
<reference key="2">
    <citation type="journal article" date="2004" name="Mol. Biochem. Parasitol.">
        <title>MSP domain proteins show enhanced expression in male germ line cells.</title>
        <authorList>
            <person name="Tarr D.E.K."/>
            <person name="Scott A.L."/>
        </authorList>
    </citation>
    <scope>TISSUE SPECIFICITY</scope>
</reference>
<sequence length="107" mass="11759">MLTIEPPSATFPASGGSSTHTITSVNESRMAFKVKSSNNEHYRVRPVYGFVEARGKMKFEIIRLEGPVKDDKIMLQYAEVPADETDAQAPFKAGAQQGDVTILLKTN</sequence>
<evidence type="ECO:0000255" key="1">
    <source>
        <dbReference type="PROSITE-ProRule" id="PRU00132"/>
    </source>
</evidence>
<evidence type="ECO:0000256" key="2">
    <source>
        <dbReference type="SAM" id="MobiDB-lite"/>
    </source>
</evidence>
<evidence type="ECO:0000269" key="3">
    <source>
    </source>
</evidence>